<name>Y001_HIS1I</name>
<sequence length="44" mass="5084">MNCEKCSGDMELQDSHYSYVSPTNRVAIKYYKCLECGNEMAIEE</sequence>
<organism>
    <name type="scientific">His1 virus (isolate Australia/Victoria)</name>
    <name type="common">His1V</name>
    <name type="synonym">Haloarcula hispanica virus 1</name>
    <dbReference type="NCBI Taxonomy" id="654912"/>
    <lineage>
        <taxon>Viruses</taxon>
        <taxon>Viruses incertae sedis</taxon>
        <taxon>Halspiviridae</taxon>
        <taxon>Salterprovirus</taxon>
        <taxon>Salterprovirus His1</taxon>
    </lineage>
</organism>
<protein>
    <recommendedName>
        <fullName>Uncharacterized protein ORF1</fullName>
    </recommendedName>
</protein>
<accession>Q25BJ4</accession>
<gene>
    <name type="ORF">ORF1</name>
</gene>
<proteinExistence type="predicted"/>
<feature type="chain" id="PRO_0000384872" description="Uncharacterized protein ORF1">
    <location>
        <begin position="1"/>
        <end position="44"/>
    </location>
</feature>
<keyword id="KW-1185">Reference proteome</keyword>
<organismHost>
    <name type="scientific">Haloarcula hispanica</name>
    <dbReference type="NCBI Taxonomy" id="51589"/>
</organismHost>
<reference key="1">
    <citation type="journal article" date="2006" name="Virology">
        <title>His1 and His2 are distantly related, spindle-shaped haloviruses belonging to the novel virus group, Salterprovirus.</title>
        <authorList>
            <person name="Bath C."/>
            <person name="Cukalac T."/>
            <person name="Porter K."/>
            <person name="Dyall-Smith M.L."/>
        </authorList>
    </citation>
    <scope>NUCLEOTIDE SEQUENCE [GENOMIC DNA]</scope>
</reference>
<dbReference type="EMBL" id="AF191796">
    <property type="protein sequence ID" value="AAQ13716.1"/>
    <property type="molecule type" value="Genomic_DNA"/>
</dbReference>
<dbReference type="RefSeq" id="YP_529513.1">
    <property type="nucleotide sequence ID" value="NC_007914.1"/>
</dbReference>
<dbReference type="KEGG" id="vg:5142418"/>
<dbReference type="Proteomes" id="UP000007024">
    <property type="component" value="Segment"/>
</dbReference>